<organism>
    <name type="scientific">Chlamydia trachomatis serovar D (strain ATCC VR-885 / DSM 19411 / UW-3/Cx)</name>
    <dbReference type="NCBI Taxonomy" id="272561"/>
    <lineage>
        <taxon>Bacteria</taxon>
        <taxon>Pseudomonadati</taxon>
        <taxon>Chlamydiota</taxon>
        <taxon>Chlamydiia</taxon>
        <taxon>Chlamydiales</taxon>
        <taxon>Chlamydiaceae</taxon>
        <taxon>Chlamydia/Chlamydophila group</taxon>
        <taxon>Chlamydia</taxon>
    </lineage>
</organism>
<protein>
    <recommendedName>
        <fullName>ParA family protein CT_582</fullName>
    </recommendedName>
</protein>
<feature type="chain" id="PRO_0000201985" description="ParA family protein CT_582">
    <location>
        <begin position="1"/>
        <end position="255"/>
    </location>
</feature>
<dbReference type="EMBL" id="AE001273">
    <property type="protein sequence ID" value="AAC68184.1"/>
    <property type="molecule type" value="Genomic_DNA"/>
</dbReference>
<dbReference type="PIR" id="G71495">
    <property type="entry name" value="G71495"/>
</dbReference>
<dbReference type="RefSeq" id="WP_009871948.1">
    <property type="nucleotide sequence ID" value="NC_000117.1"/>
</dbReference>
<dbReference type="SMR" id="O84586"/>
<dbReference type="FunCoup" id="O84586">
    <property type="interactions" value="152"/>
</dbReference>
<dbReference type="STRING" id="272561.CT_582"/>
<dbReference type="EnsemblBacteria" id="AAC68184">
    <property type="protein sequence ID" value="AAC68184"/>
    <property type="gene ID" value="CT_582"/>
</dbReference>
<dbReference type="KEGG" id="ctr:CT_582"/>
<dbReference type="PATRIC" id="fig|272561.5.peg.634"/>
<dbReference type="HOGENOM" id="CLU_037612_1_4_0"/>
<dbReference type="InParanoid" id="O84586"/>
<dbReference type="OrthoDB" id="9815116at2"/>
<dbReference type="Proteomes" id="UP000000431">
    <property type="component" value="Chromosome"/>
</dbReference>
<dbReference type="CDD" id="cd02042">
    <property type="entry name" value="ParAB_family"/>
    <property type="match status" value="1"/>
</dbReference>
<dbReference type="Gene3D" id="3.40.50.300">
    <property type="entry name" value="P-loop containing nucleotide triphosphate hydrolases"/>
    <property type="match status" value="1"/>
</dbReference>
<dbReference type="InterPro" id="IPR025669">
    <property type="entry name" value="AAA_dom"/>
</dbReference>
<dbReference type="InterPro" id="IPR050678">
    <property type="entry name" value="DNA_Partitioning_ATPase"/>
</dbReference>
<dbReference type="InterPro" id="IPR027417">
    <property type="entry name" value="P-loop_NTPase"/>
</dbReference>
<dbReference type="PANTHER" id="PTHR13696">
    <property type="entry name" value="P-LOOP CONTAINING NUCLEOSIDE TRIPHOSPHATE HYDROLASE"/>
    <property type="match status" value="1"/>
</dbReference>
<dbReference type="PANTHER" id="PTHR13696:SF52">
    <property type="entry name" value="PARA FAMILY PROTEIN CT_582"/>
    <property type="match status" value="1"/>
</dbReference>
<dbReference type="Pfam" id="PF13614">
    <property type="entry name" value="AAA_31"/>
    <property type="match status" value="1"/>
</dbReference>
<dbReference type="SUPFAM" id="SSF52540">
    <property type="entry name" value="P-loop containing nucleoside triphosphate hydrolases"/>
    <property type="match status" value="1"/>
</dbReference>
<name>PARA_CHLTR</name>
<sequence length="255" mass="28208">MKTIAVNSFKGGTAKTSTTLHLGAALAQYHKARVLLIDFDAQANLTAGLGLDPDCYDSLAVVLQGEKNIEEVIRPIDSSGLDLIPADTWLERVEVSGSLAADRYSHERLKIILSKIEHRYDYVIIDTPPSLCWLTESALIAAQHALICATPEFYSVKGLERLATFIQGISSRHPLNILGVTLSFWNYRGKNNAAFTELIQKTFPGKLLNTRIRRDITISEAAIHGKPVFSTAPSARASEDYLKLTEELLFLLRNI</sequence>
<gene>
    <name type="ordered locus">CT_582</name>
</gene>
<comment type="similarity">
    <text evidence="1">Belongs to the ParA family.</text>
</comment>
<reference key="1">
    <citation type="journal article" date="1998" name="Science">
        <title>Genome sequence of an obligate intracellular pathogen of humans: Chlamydia trachomatis.</title>
        <authorList>
            <person name="Stephens R.S."/>
            <person name="Kalman S."/>
            <person name="Lammel C.J."/>
            <person name="Fan J."/>
            <person name="Marathe R."/>
            <person name="Aravind L."/>
            <person name="Mitchell W.P."/>
            <person name="Olinger L."/>
            <person name="Tatusov R.L."/>
            <person name="Zhao Q."/>
            <person name="Koonin E.V."/>
            <person name="Davis R.W."/>
        </authorList>
    </citation>
    <scope>NUCLEOTIDE SEQUENCE [LARGE SCALE GENOMIC DNA]</scope>
    <source>
        <strain>ATCC VR-885 / DSM 19411 / UW-3/Cx</strain>
    </source>
</reference>
<proteinExistence type="inferred from homology"/>
<accession>O84586</accession>
<evidence type="ECO:0000305" key="1"/>
<keyword id="KW-1185">Reference proteome</keyword>